<reference key="1">
    <citation type="journal article" date="2009" name="BMC Genomics">
        <title>Evidence for niche adaptation in the genome of the bovine pathogen Streptococcus uberis.</title>
        <authorList>
            <person name="Ward P.N."/>
            <person name="Holden M.T.G."/>
            <person name="Leigh J.A."/>
            <person name="Lennard N."/>
            <person name="Bignell A."/>
            <person name="Barron A."/>
            <person name="Clark L."/>
            <person name="Quail M.A."/>
            <person name="Woodward J."/>
            <person name="Barrell B.G."/>
            <person name="Egan S.A."/>
            <person name="Field T.R."/>
            <person name="Maskell D."/>
            <person name="Kehoe M."/>
            <person name="Dowson C.G."/>
            <person name="Chanter N."/>
            <person name="Whatmore A.M."/>
            <person name="Bentley S.D."/>
            <person name="Parkhill J."/>
        </authorList>
    </citation>
    <scope>NUCLEOTIDE SEQUENCE [LARGE SCALE GENOMIC DNA]</scope>
    <source>
        <strain>ATCC BAA-854 / 0140J</strain>
    </source>
</reference>
<accession>B9DVG9</accession>
<protein>
    <recommendedName>
        <fullName evidence="1">Putative pyruvate, phosphate dikinase regulatory protein</fullName>
        <shortName evidence="1">PPDK regulatory protein</shortName>
        <ecNumber evidence="1">2.7.11.32</ecNumber>
        <ecNumber evidence="1">2.7.4.27</ecNumber>
    </recommendedName>
</protein>
<keyword id="KW-0418">Kinase</keyword>
<keyword id="KW-0547">Nucleotide-binding</keyword>
<keyword id="KW-1185">Reference proteome</keyword>
<keyword id="KW-0723">Serine/threonine-protein kinase</keyword>
<keyword id="KW-0808">Transferase</keyword>
<gene>
    <name type="ordered locus">SUB1520</name>
</gene>
<evidence type="ECO:0000255" key="1">
    <source>
        <dbReference type="HAMAP-Rule" id="MF_00921"/>
    </source>
</evidence>
<sequence length="271" mass="30807">MDDRLTIFIISDSLGVTARTIAKACIQQFPNHDNWQFERYSNINNKELLDKVLEKAKDKNVCLMFSLVDDDLARYAQERSEEEHFVYVDLLSNVIKAMSKLSGVEPLGQPGLLRKLDKHYFKRVEAIEFAVKYDDGKDPRGILKADLILLGISRTSKTPLSMYLADKHLKVVNIPIVPEVPLPKELNEVSPKKIVGLTNSVERLSQVRKERLRSLGVSGTASYANKDRIYEEAAYAEEVMRKLKCPIINVSDKAIEETATIILEMIKENQL</sequence>
<feature type="chain" id="PRO_1000149717" description="Putative pyruvate, phosphate dikinase regulatory protein">
    <location>
        <begin position="1"/>
        <end position="271"/>
    </location>
</feature>
<feature type="binding site" evidence="1">
    <location>
        <begin position="151"/>
        <end position="158"/>
    </location>
    <ligand>
        <name>ADP</name>
        <dbReference type="ChEBI" id="CHEBI:456216"/>
    </ligand>
</feature>
<organism>
    <name type="scientific">Streptococcus uberis (strain ATCC BAA-854 / 0140J)</name>
    <dbReference type="NCBI Taxonomy" id="218495"/>
    <lineage>
        <taxon>Bacteria</taxon>
        <taxon>Bacillati</taxon>
        <taxon>Bacillota</taxon>
        <taxon>Bacilli</taxon>
        <taxon>Lactobacillales</taxon>
        <taxon>Streptococcaceae</taxon>
        <taxon>Streptococcus</taxon>
    </lineage>
</organism>
<proteinExistence type="inferred from homology"/>
<name>PDRP_STRU0</name>
<dbReference type="EC" id="2.7.11.32" evidence="1"/>
<dbReference type="EC" id="2.7.4.27" evidence="1"/>
<dbReference type="EMBL" id="AM946015">
    <property type="protein sequence ID" value="CAR43258.1"/>
    <property type="molecule type" value="Genomic_DNA"/>
</dbReference>
<dbReference type="RefSeq" id="WP_015911829.1">
    <property type="nucleotide sequence ID" value="NC_012004.1"/>
</dbReference>
<dbReference type="SMR" id="B9DVG9"/>
<dbReference type="STRING" id="218495.SUB1520"/>
<dbReference type="KEGG" id="sub:SUB1520"/>
<dbReference type="eggNOG" id="COG1806">
    <property type="taxonomic scope" value="Bacteria"/>
</dbReference>
<dbReference type="HOGENOM" id="CLU_046206_2_1_9"/>
<dbReference type="OrthoDB" id="9782201at2"/>
<dbReference type="Proteomes" id="UP000000449">
    <property type="component" value="Chromosome"/>
</dbReference>
<dbReference type="GO" id="GO:0043531">
    <property type="term" value="F:ADP binding"/>
    <property type="evidence" value="ECO:0007669"/>
    <property type="project" value="UniProtKB-UniRule"/>
</dbReference>
<dbReference type="GO" id="GO:0005524">
    <property type="term" value="F:ATP binding"/>
    <property type="evidence" value="ECO:0007669"/>
    <property type="project" value="InterPro"/>
</dbReference>
<dbReference type="GO" id="GO:0016776">
    <property type="term" value="F:phosphotransferase activity, phosphate group as acceptor"/>
    <property type="evidence" value="ECO:0007669"/>
    <property type="project" value="UniProtKB-UniRule"/>
</dbReference>
<dbReference type="GO" id="GO:0004674">
    <property type="term" value="F:protein serine/threonine kinase activity"/>
    <property type="evidence" value="ECO:0007669"/>
    <property type="project" value="UniProtKB-UniRule"/>
</dbReference>
<dbReference type="HAMAP" id="MF_00921">
    <property type="entry name" value="PDRP"/>
    <property type="match status" value="1"/>
</dbReference>
<dbReference type="InterPro" id="IPR005177">
    <property type="entry name" value="Kinase-pyrophosphorylase"/>
</dbReference>
<dbReference type="InterPro" id="IPR026565">
    <property type="entry name" value="PPDK_reg"/>
</dbReference>
<dbReference type="NCBIfam" id="NF003742">
    <property type="entry name" value="PRK05339.1"/>
    <property type="match status" value="1"/>
</dbReference>
<dbReference type="PANTHER" id="PTHR31756">
    <property type="entry name" value="PYRUVATE, PHOSPHATE DIKINASE REGULATORY PROTEIN 1, CHLOROPLASTIC"/>
    <property type="match status" value="1"/>
</dbReference>
<dbReference type="PANTHER" id="PTHR31756:SF3">
    <property type="entry name" value="PYRUVATE, PHOSPHATE DIKINASE REGULATORY PROTEIN 1, CHLOROPLASTIC"/>
    <property type="match status" value="1"/>
</dbReference>
<dbReference type="Pfam" id="PF03618">
    <property type="entry name" value="Kinase-PPPase"/>
    <property type="match status" value="1"/>
</dbReference>
<comment type="function">
    <text evidence="1">Bifunctional serine/threonine kinase and phosphorylase involved in the regulation of the pyruvate, phosphate dikinase (PPDK) by catalyzing its phosphorylation/dephosphorylation.</text>
</comment>
<comment type="catalytic activity">
    <reaction evidence="1">
        <text>N(tele)-phospho-L-histidyl/L-threonyl-[pyruvate, phosphate dikinase] + ADP = N(tele)-phospho-L-histidyl/O-phospho-L-threonyl-[pyruvate, phosphate dikinase] + AMP + H(+)</text>
        <dbReference type="Rhea" id="RHEA:43692"/>
        <dbReference type="Rhea" id="RHEA-COMP:10650"/>
        <dbReference type="Rhea" id="RHEA-COMP:10651"/>
        <dbReference type="ChEBI" id="CHEBI:15378"/>
        <dbReference type="ChEBI" id="CHEBI:30013"/>
        <dbReference type="ChEBI" id="CHEBI:61977"/>
        <dbReference type="ChEBI" id="CHEBI:83586"/>
        <dbReference type="ChEBI" id="CHEBI:456215"/>
        <dbReference type="ChEBI" id="CHEBI:456216"/>
        <dbReference type="EC" id="2.7.11.32"/>
    </reaction>
</comment>
<comment type="catalytic activity">
    <reaction evidence="1">
        <text>N(tele)-phospho-L-histidyl/O-phospho-L-threonyl-[pyruvate, phosphate dikinase] + phosphate + H(+) = N(tele)-phospho-L-histidyl/L-threonyl-[pyruvate, phosphate dikinase] + diphosphate</text>
        <dbReference type="Rhea" id="RHEA:43696"/>
        <dbReference type="Rhea" id="RHEA-COMP:10650"/>
        <dbReference type="Rhea" id="RHEA-COMP:10651"/>
        <dbReference type="ChEBI" id="CHEBI:15378"/>
        <dbReference type="ChEBI" id="CHEBI:30013"/>
        <dbReference type="ChEBI" id="CHEBI:33019"/>
        <dbReference type="ChEBI" id="CHEBI:43474"/>
        <dbReference type="ChEBI" id="CHEBI:61977"/>
        <dbReference type="ChEBI" id="CHEBI:83586"/>
        <dbReference type="EC" id="2.7.4.27"/>
    </reaction>
</comment>
<comment type="similarity">
    <text evidence="1">Belongs to the pyruvate, phosphate/water dikinase regulatory protein family. PDRP subfamily.</text>
</comment>